<gene>
    <name type="primary">yciN</name>
    <name type="ordered locus">Z2537</name>
    <name type="ordered locus">ECs1845</name>
</gene>
<reference key="1">
    <citation type="journal article" date="2001" name="Nature">
        <title>Genome sequence of enterohaemorrhagic Escherichia coli O157:H7.</title>
        <authorList>
            <person name="Perna N.T."/>
            <person name="Plunkett G. III"/>
            <person name="Burland V."/>
            <person name="Mau B."/>
            <person name="Glasner J.D."/>
            <person name="Rose D.J."/>
            <person name="Mayhew G.F."/>
            <person name="Evans P.S."/>
            <person name="Gregor J."/>
            <person name="Kirkpatrick H.A."/>
            <person name="Posfai G."/>
            <person name="Hackett J."/>
            <person name="Klink S."/>
            <person name="Boutin A."/>
            <person name="Shao Y."/>
            <person name="Miller L."/>
            <person name="Grotbeck E.J."/>
            <person name="Davis N.W."/>
            <person name="Lim A."/>
            <person name="Dimalanta E.T."/>
            <person name="Potamousis K."/>
            <person name="Apodaca J."/>
            <person name="Anantharaman T.S."/>
            <person name="Lin J."/>
            <person name="Yen G."/>
            <person name="Schwartz D.C."/>
            <person name="Welch R.A."/>
            <person name="Blattner F.R."/>
        </authorList>
    </citation>
    <scope>NUCLEOTIDE SEQUENCE [LARGE SCALE GENOMIC DNA]</scope>
    <source>
        <strain>O157:H7 / EDL933 / ATCC 700927 / EHEC</strain>
    </source>
</reference>
<reference key="2">
    <citation type="journal article" date="2001" name="DNA Res.">
        <title>Complete genome sequence of enterohemorrhagic Escherichia coli O157:H7 and genomic comparison with a laboratory strain K-12.</title>
        <authorList>
            <person name="Hayashi T."/>
            <person name="Makino K."/>
            <person name="Ohnishi M."/>
            <person name="Kurokawa K."/>
            <person name="Ishii K."/>
            <person name="Yokoyama K."/>
            <person name="Han C.-G."/>
            <person name="Ohtsubo E."/>
            <person name="Nakayama K."/>
            <person name="Murata T."/>
            <person name="Tanaka M."/>
            <person name="Tobe T."/>
            <person name="Iida T."/>
            <person name="Takami H."/>
            <person name="Honda T."/>
            <person name="Sasakawa C."/>
            <person name="Ogasawara N."/>
            <person name="Yasunaga T."/>
            <person name="Kuhara S."/>
            <person name="Shiba T."/>
            <person name="Hattori M."/>
            <person name="Shinagawa H."/>
        </authorList>
    </citation>
    <scope>NUCLEOTIDE SEQUENCE [LARGE SCALE GENOMIC DNA]</scope>
    <source>
        <strain>O157:H7 / Sakai / RIMD 0509952 / EHEC</strain>
    </source>
</reference>
<keyword id="KW-1185">Reference proteome</keyword>
<accession>P0AB63</accession>
<accession>P46132</accession>
<accession>P77447</accession>
<organism>
    <name type="scientific">Escherichia coli O157:H7</name>
    <dbReference type="NCBI Taxonomy" id="83334"/>
    <lineage>
        <taxon>Bacteria</taxon>
        <taxon>Pseudomonadati</taxon>
        <taxon>Pseudomonadota</taxon>
        <taxon>Gammaproteobacteria</taxon>
        <taxon>Enterobacterales</taxon>
        <taxon>Enterobacteriaceae</taxon>
        <taxon>Escherichia</taxon>
    </lineage>
</organism>
<sequence length="83" mass="9386">MNKETQPIDRETLLKEANKIIREHEDTLAGIEATGVTQRNGVLVFTGDYFLDEQGLPTAKSTAVFNMFKHLAHVLSEKYHLVD</sequence>
<name>YCIN_ECO57</name>
<proteinExistence type="predicted"/>
<dbReference type="EMBL" id="AE005174">
    <property type="protein sequence ID" value="AAG56542.1"/>
    <property type="molecule type" value="Genomic_DNA"/>
</dbReference>
<dbReference type="EMBL" id="BA000007">
    <property type="protein sequence ID" value="BAB35268.1"/>
    <property type="molecule type" value="Genomic_DNA"/>
</dbReference>
<dbReference type="PIR" id="B85760">
    <property type="entry name" value="B85760"/>
</dbReference>
<dbReference type="PIR" id="E90859">
    <property type="entry name" value="E90859"/>
</dbReference>
<dbReference type="RefSeq" id="NP_309872.1">
    <property type="nucleotide sequence ID" value="NC_002695.1"/>
</dbReference>
<dbReference type="RefSeq" id="WP_001031530.1">
    <property type="nucleotide sequence ID" value="NZ_VOAI01000015.1"/>
</dbReference>
<dbReference type="SMR" id="P0AB63"/>
<dbReference type="STRING" id="155864.Z2537"/>
<dbReference type="GeneID" id="912821"/>
<dbReference type="KEGG" id="ece:Z2537"/>
<dbReference type="KEGG" id="ecs:ECs_1845"/>
<dbReference type="PATRIC" id="fig|386585.9.peg.1943"/>
<dbReference type="eggNOG" id="ENOG5032SBA">
    <property type="taxonomic scope" value="Bacteria"/>
</dbReference>
<dbReference type="HOGENOM" id="CLU_164128_0_0_6"/>
<dbReference type="OMA" id="DYLHGMV"/>
<dbReference type="Proteomes" id="UP000000558">
    <property type="component" value="Chromosome"/>
</dbReference>
<dbReference type="Proteomes" id="UP000002519">
    <property type="component" value="Chromosome"/>
</dbReference>
<dbReference type="FunFam" id="3.30.300.360:FF:000001">
    <property type="entry name" value="DUF2498 family protein"/>
    <property type="match status" value="1"/>
</dbReference>
<dbReference type="Gene3D" id="3.30.300.360">
    <property type="entry name" value="Protein of unknown function (DUF2498)"/>
    <property type="match status" value="1"/>
</dbReference>
<dbReference type="InterPro" id="IPR019633">
    <property type="entry name" value="DUF2498"/>
</dbReference>
<dbReference type="InterPro" id="IPR038191">
    <property type="entry name" value="YciN_sf"/>
</dbReference>
<dbReference type="NCBIfam" id="NF008265">
    <property type="entry name" value="PRK11037.1"/>
    <property type="match status" value="1"/>
</dbReference>
<dbReference type="Pfam" id="PF10692">
    <property type="entry name" value="DUF2498"/>
    <property type="match status" value="1"/>
</dbReference>
<protein>
    <recommendedName>
        <fullName>Protein YciN</fullName>
    </recommendedName>
</protein>
<feature type="chain" id="PRO_0000168881" description="Protein YciN">
    <location>
        <begin position="1"/>
        <end position="83"/>
    </location>
</feature>